<dbReference type="EMBL" id="CP000931">
    <property type="protein sequence ID" value="ABZ76407.1"/>
    <property type="molecule type" value="Genomic_DNA"/>
</dbReference>
<dbReference type="RefSeq" id="WP_012276939.1">
    <property type="nucleotide sequence ID" value="NC_010334.1"/>
</dbReference>
<dbReference type="SMR" id="B0TRI9"/>
<dbReference type="STRING" id="458817.Shal_1842"/>
<dbReference type="KEGG" id="shl:Shal_1842"/>
<dbReference type="eggNOG" id="COG2186">
    <property type="taxonomic scope" value="Bacteria"/>
</dbReference>
<dbReference type="HOGENOM" id="CLU_017584_9_4_6"/>
<dbReference type="OrthoDB" id="5683977at2"/>
<dbReference type="Proteomes" id="UP000001317">
    <property type="component" value="Chromosome"/>
</dbReference>
<dbReference type="GO" id="GO:0005737">
    <property type="term" value="C:cytoplasm"/>
    <property type="evidence" value="ECO:0007669"/>
    <property type="project" value="UniProtKB-SubCell"/>
</dbReference>
<dbReference type="GO" id="GO:0003677">
    <property type="term" value="F:DNA binding"/>
    <property type="evidence" value="ECO:0007669"/>
    <property type="project" value="UniProtKB-KW"/>
</dbReference>
<dbReference type="GO" id="GO:0003700">
    <property type="term" value="F:DNA-binding transcription factor activity"/>
    <property type="evidence" value="ECO:0007669"/>
    <property type="project" value="UniProtKB-UniRule"/>
</dbReference>
<dbReference type="GO" id="GO:0000062">
    <property type="term" value="F:fatty-acyl-CoA binding"/>
    <property type="evidence" value="ECO:0007669"/>
    <property type="project" value="InterPro"/>
</dbReference>
<dbReference type="GO" id="GO:0006631">
    <property type="term" value="P:fatty acid metabolic process"/>
    <property type="evidence" value="ECO:0007669"/>
    <property type="project" value="UniProtKB-KW"/>
</dbReference>
<dbReference type="GO" id="GO:0019217">
    <property type="term" value="P:regulation of fatty acid metabolic process"/>
    <property type="evidence" value="ECO:0007669"/>
    <property type="project" value="UniProtKB-UniRule"/>
</dbReference>
<dbReference type="CDD" id="cd07377">
    <property type="entry name" value="WHTH_GntR"/>
    <property type="match status" value="1"/>
</dbReference>
<dbReference type="Gene3D" id="1.20.120.530">
    <property type="entry name" value="GntR ligand-binding domain-like"/>
    <property type="match status" value="1"/>
</dbReference>
<dbReference type="Gene3D" id="1.10.10.10">
    <property type="entry name" value="Winged helix-like DNA-binding domain superfamily/Winged helix DNA-binding domain"/>
    <property type="match status" value="1"/>
</dbReference>
<dbReference type="HAMAP" id="MF_00696">
    <property type="entry name" value="HTH_FadR"/>
    <property type="match status" value="1"/>
</dbReference>
<dbReference type="InterPro" id="IPR014178">
    <property type="entry name" value="FA-response_TF_FadR"/>
</dbReference>
<dbReference type="InterPro" id="IPR028374">
    <property type="entry name" value="FadR_C"/>
</dbReference>
<dbReference type="InterPro" id="IPR008920">
    <property type="entry name" value="TF_FadR/GntR_C"/>
</dbReference>
<dbReference type="InterPro" id="IPR000524">
    <property type="entry name" value="Tscrpt_reg_HTH_GntR"/>
</dbReference>
<dbReference type="InterPro" id="IPR036388">
    <property type="entry name" value="WH-like_DNA-bd_sf"/>
</dbReference>
<dbReference type="InterPro" id="IPR036390">
    <property type="entry name" value="WH_DNA-bd_sf"/>
</dbReference>
<dbReference type="NCBIfam" id="TIGR02812">
    <property type="entry name" value="fadR_gamma"/>
    <property type="match status" value="1"/>
</dbReference>
<dbReference type="NCBIfam" id="NF003444">
    <property type="entry name" value="PRK04984.1"/>
    <property type="match status" value="1"/>
</dbReference>
<dbReference type="PANTHER" id="PTHR43537:SF52">
    <property type="entry name" value="FATTY ACID METABOLISM REGULATOR PROTEIN"/>
    <property type="match status" value="1"/>
</dbReference>
<dbReference type="PANTHER" id="PTHR43537">
    <property type="entry name" value="TRANSCRIPTIONAL REGULATOR, GNTR FAMILY"/>
    <property type="match status" value="1"/>
</dbReference>
<dbReference type="Pfam" id="PF07840">
    <property type="entry name" value="FadR_C"/>
    <property type="match status" value="1"/>
</dbReference>
<dbReference type="Pfam" id="PF00392">
    <property type="entry name" value="GntR"/>
    <property type="match status" value="1"/>
</dbReference>
<dbReference type="PRINTS" id="PR00035">
    <property type="entry name" value="HTHGNTR"/>
</dbReference>
<dbReference type="SMART" id="SM00345">
    <property type="entry name" value="HTH_GNTR"/>
    <property type="match status" value="1"/>
</dbReference>
<dbReference type="SUPFAM" id="SSF48008">
    <property type="entry name" value="GntR ligand-binding domain-like"/>
    <property type="match status" value="1"/>
</dbReference>
<dbReference type="SUPFAM" id="SSF46785">
    <property type="entry name" value="Winged helix' DNA-binding domain"/>
    <property type="match status" value="1"/>
</dbReference>
<dbReference type="PROSITE" id="PS50949">
    <property type="entry name" value="HTH_GNTR"/>
    <property type="match status" value="1"/>
</dbReference>
<evidence type="ECO:0000255" key="1">
    <source>
        <dbReference type="HAMAP-Rule" id="MF_00696"/>
    </source>
</evidence>
<accession>B0TRI9</accession>
<reference key="1">
    <citation type="submission" date="2008-01" db="EMBL/GenBank/DDBJ databases">
        <title>Complete sequence of Shewanella halifaxensis HAW-EB4.</title>
        <authorList>
            <consortium name="US DOE Joint Genome Institute"/>
            <person name="Copeland A."/>
            <person name="Lucas S."/>
            <person name="Lapidus A."/>
            <person name="Glavina del Rio T."/>
            <person name="Dalin E."/>
            <person name="Tice H."/>
            <person name="Bruce D."/>
            <person name="Goodwin L."/>
            <person name="Pitluck S."/>
            <person name="Sims D."/>
            <person name="Brettin T."/>
            <person name="Detter J.C."/>
            <person name="Han C."/>
            <person name="Kuske C.R."/>
            <person name="Schmutz J."/>
            <person name="Larimer F."/>
            <person name="Land M."/>
            <person name="Hauser L."/>
            <person name="Kyrpides N."/>
            <person name="Kim E."/>
            <person name="Zhao J.-S."/>
            <person name="Richardson P."/>
        </authorList>
    </citation>
    <scope>NUCLEOTIDE SEQUENCE [LARGE SCALE GENOMIC DNA]</scope>
    <source>
        <strain>HAW-EB4</strain>
    </source>
</reference>
<gene>
    <name evidence="1" type="primary">fadR</name>
    <name type="ordered locus">Shal_1842</name>
</gene>
<protein>
    <recommendedName>
        <fullName evidence="1">Fatty acid metabolism regulator protein</fullName>
    </recommendedName>
</protein>
<feature type="chain" id="PRO_1000083188" description="Fatty acid metabolism regulator protein">
    <location>
        <begin position="1"/>
        <end position="239"/>
    </location>
</feature>
<feature type="domain" description="HTH gntR-type" evidence="1">
    <location>
        <begin position="6"/>
        <end position="74"/>
    </location>
</feature>
<feature type="DNA-binding region" description="H-T-H motif" evidence="1">
    <location>
        <begin position="34"/>
        <end position="53"/>
    </location>
</feature>
<organism>
    <name type="scientific">Shewanella halifaxensis (strain HAW-EB4)</name>
    <dbReference type="NCBI Taxonomy" id="458817"/>
    <lineage>
        <taxon>Bacteria</taxon>
        <taxon>Pseudomonadati</taxon>
        <taxon>Pseudomonadota</taxon>
        <taxon>Gammaproteobacteria</taxon>
        <taxon>Alteromonadales</taxon>
        <taxon>Shewanellaceae</taxon>
        <taxon>Shewanella</taxon>
    </lineage>
</organism>
<proteinExistence type="inferred from homology"/>
<name>FADR_SHEHH</name>
<keyword id="KW-0010">Activator</keyword>
<keyword id="KW-0963">Cytoplasm</keyword>
<keyword id="KW-0238">DNA-binding</keyword>
<keyword id="KW-0276">Fatty acid metabolism</keyword>
<keyword id="KW-0443">Lipid metabolism</keyword>
<keyword id="KW-0678">Repressor</keyword>
<keyword id="KW-0804">Transcription</keyword>
<keyword id="KW-0805">Transcription regulation</keyword>
<sequence length="239" mass="26787">MIINAKGPASFAEKYIVRSIWENKFPPGSILPAERELSELIGVTRTTLREVLQRLARDGWLTIQHGKPTRVNNFWETSGLNILETIAELNPDGFPELVDQLLSARSSVSAIYFRGAIRNSPDEAVVALANINELEDTAQAYADFDYALQHTLAFSSGNPLYVLILNGFKGLYSRVGRYYFSSAEARALAMDFYKQLQQLAIDKNYTDVPALMRTYGINSGVMWQSLRDDMPVELGHSDT</sequence>
<comment type="function">
    <text evidence="1">Multifunctional regulator of fatty acid metabolism.</text>
</comment>
<comment type="subunit">
    <text evidence="1">Homodimer.</text>
</comment>
<comment type="subcellular location">
    <subcellularLocation>
        <location evidence="1">Cytoplasm</location>
    </subcellularLocation>
</comment>